<sequence length="309" mass="32456">MVRIYTLTLAPSLDSATITPQIYPEGKLRCTAPVFEPGGGGINVARAIAHLGGSATAIFPAGGATGEHLVSLLADENVPVATVEAKDWTRQNLHVHVEASGEQYRFVMPGAALNEDEFRQLEEQVLEIESGAILVISGSLPPGVKLEKLTQLISAAQKQGIRCIVDSSGEALSAALAIGNIELVKPNQKELSALVNRELTQPDDVRKAAQEIVNSGKAKRVVVSLGPQGALGVDSENCIQVVPPPVKSQSTVGAGDSMVGAMTLKLAENASLEEMVRFGVAAGSAATLNQGTRLCSHDDTQKIYAYLSR</sequence>
<organism>
    <name type="scientific">Escherichia coli (strain K12)</name>
    <dbReference type="NCBI Taxonomy" id="83333"/>
    <lineage>
        <taxon>Bacteria</taxon>
        <taxon>Pseudomonadati</taxon>
        <taxon>Pseudomonadota</taxon>
        <taxon>Gammaproteobacteria</taxon>
        <taxon>Enterobacterales</taxon>
        <taxon>Enterobacteriaceae</taxon>
        <taxon>Escherichia</taxon>
    </lineage>
</organism>
<dbReference type="EC" id="2.7.1.11"/>
<dbReference type="EMBL" id="K02500">
    <property type="protein sequence ID" value="AAA24321.1"/>
    <property type="molecule type" value="Genomic_DNA"/>
</dbReference>
<dbReference type="EMBL" id="U00096">
    <property type="protein sequence ID" value="AAC74793.1"/>
    <property type="molecule type" value="Genomic_DNA"/>
</dbReference>
<dbReference type="EMBL" id="AP009048">
    <property type="protein sequence ID" value="BAA15500.2"/>
    <property type="molecule type" value="Genomic_DNA"/>
</dbReference>
<dbReference type="EMBL" id="K00128">
    <property type="protein sequence ID" value="AAA24320.1"/>
    <property type="molecule type" value="Genomic_DNA"/>
</dbReference>
<dbReference type="PIR" id="C64931">
    <property type="entry name" value="KIECFB"/>
</dbReference>
<dbReference type="RefSeq" id="NP_416237.3">
    <property type="nucleotide sequence ID" value="NC_000913.3"/>
</dbReference>
<dbReference type="RefSeq" id="WP_000251727.1">
    <property type="nucleotide sequence ID" value="NZ_SSZK01000001.1"/>
</dbReference>
<dbReference type="PDB" id="3CQD">
    <property type="method" value="X-ray"/>
    <property type="resolution" value="1.98 A"/>
    <property type="chains" value="A/B=1-309"/>
</dbReference>
<dbReference type="PDB" id="3N1C">
    <property type="method" value="X-ray"/>
    <property type="resolution" value="2.00 A"/>
    <property type="chains" value="A/B/C/D=1-309"/>
</dbReference>
<dbReference type="PDB" id="3UMO">
    <property type="method" value="X-ray"/>
    <property type="resolution" value="1.70 A"/>
    <property type="chains" value="A/B=1-309"/>
</dbReference>
<dbReference type="PDB" id="3UMP">
    <property type="method" value="X-ray"/>
    <property type="resolution" value="1.85 A"/>
    <property type="chains" value="A/B=1-309"/>
</dbReference>
<dbReference type="PDB" id="3UQD">
    <property type="method" value="X-ray"/>
    <property type="resolution" value="2.14 A"/>
    <property type="chains" value="A/B/C/D=1-309"/>
</dbReference>
<dbReference type="PDB" id="3UQE">
    <property type="method" value="X-ray"/>
    <property type="resolution" value="2.20 A"/>
    <property type="chains" value="A/B=1-309"/>
</dbReference>
<dbReference type="PDBsum" id="3CQD"/>
<dbReference type="PDBsum" id="3N1C"/>
<dbReference type="PDBsum" id="3UMO"/>
<dbReference type="PDBsum" id="3UMP"/>
<dbReference type="PDBsum" id="3UQD"/>
<dbReference type="PDBsum" id="3UQE"/>
<dbReference type="SMR" id="P06999"/>
<dbReference type="BioGRID" id="4263076">
    <property type="interactions" value="39"/>
</dbReference>
<dbReference type="DIP" id="DIP-10465N"/>
<dbReference type="FunCoup" id="P06999">
    <property type="interactions" value="311"/>
</dbReference>
<dbReference type="MINT" id="P06999"/>
<dbReference type="STRING" id="511145.b1723"/>
<dbReference type="jPOST" id="P06999"/>
<dbReference type="PaxDb" id="511145-b1723"/>
<dbReference type="EnsemblBacteria" id="AAC74793">
    <property type="protein sequence ID" value="AAC74793"/>
    <property type="gene ID" value="b1723"/>
</dbReference>
<dbReference type="GeneID" id="946230"/>
<dbReference type="KEGG" id="ecj:JW5280"/>
<dbReference type="KEGG" id="eco:b1723"/>
<dbReference type="KEGG" id="ecoc:C3026_09855"/>
<dbReference type="PATRIC" id="fig|1411691.4.peg.533"/>
<dbReference type="EchoBASE" id="EB0694"/>
<dbReference type="eggNOG" id="COG1105">
    <property type="taxonomic scope" value="Bacteria"/>
</dbReference>
<dbReference type="HOGENOM" id="CLU_050013_0_2_6"/>
<dbReference type="InParanoid" id="P06999"/>
<dbReference type="OMA" id="QLNEPGP"/>
<dbReference type="OrthoDB" id="9801219at2"/>
<dbReference type="PhylomeDB" id="P06999"/>
<dbReference type="BioCyc" id="EcoCyc:6PFK-2-MONOMER"/>
<dbReference type="BioCyc" id="MetaCyc:6PFK-2-MONOMER"/>
<dbReference type="BRENDA" id="2.7.1.11">
    <property type="organism ID" value="2026"/>
</dbReference>
<dbReference type="SABIO-RK" id="P06999"/>
<dbReference type="UniPathway" id="UPA00109">
    <property type="reaction ID" value="UER00182"/>
</dbReference>
<dbReference type="EvolutionaryTrace" id="P06999"/>
<dbReference type="PRO" id="PR:P06999"/>
<dbReference type="Proteomes" id="UP000000625">
    <property type="component" value="Chromosome"/>
</dbReference>
<dbReference type="GO" id="GO:0005829">
    <property type="term" value="C:cytosol"/>
    <property type="evidence" value="ECO:0000314"/>
    <property type="project" value="EcoCyc"/>
</dbReference>
<dbReference type="GO" id="GO:0003872">
    <property type="term" value="F:6-phosphofructokinase activity"/>
    <property type="evidence" value="ECO:0000314"/>
    <property type="project" value="EcoCyc"/>
</dbReference>
<dbReference type="GO" id="GO:0005524">
    <property type="term" value="F:ATP binding"/>
    <property type="evidence" value="ECO:0007669"/>
    <property type="project" value="UniProtKB-KW"/>
</dbReference>
<dbReference type="GO" id="GO:0042802">
    <property type="term" value="F:identical protein binding"/>
    <property type="evidence" value="ECO:0000353"/>
    <property type="project" value="IntAct"/>
</dbReference>
<dbReference type="GO" id="GO:0000287">
    <property type="term" value="F:magnesium ion binding"/>
    <property type="evidence" value="ECO:0000314"/>
    <property type="project" value="EcoCyc"/>
</dbReference>
<dbReference type="GO" id="GO:0042803">
    <property type="term" value="F:protein homodimerization activity"/>
    <property type="evidence" value="ECO:0000314"/>
    <property type="project" value="EcoCyc"/>
</dbReference>
<dbReference type="GO" id="GO:0009024">
    <property type="term" value="F:tagatose-6-phosphate kinase activity"/>
    <property type="evidence" value="ECO:0000314"/>
    <property type="project" value="EcoCyc"/>
</dbReference>
<dbReference type="GO" id="GO:0006974">
    <property type="term" value="P:DNA damage response"/>
    <property type="evidence" value="ECO:0000270"/>
    <property type="project" value="EcoliWiki"/>
</dbReference>
<dbReference type="GO" id="GO:0006096">
    <property type="term" value="P:glycolytic process"/>
    <property type="evidence" value="ECO:0000315"/>
    <property type="project" value="EcoCyc"/>
</dbReference>
<dbReference type="CDD" id="cd01164">
    <property type="entry name" value="FruK_PfkB_like"/>
    <property type="match status" value="1"/>
</dbReference>
<dbReference type="FunFam" id="3.40.1190.20:FF:000001">
    <property type="entry name" value="Phosphofructokinase"/>
    <property type="match status" value="1"/>
</dbReference>
<dbReference type="Gene3D" id="3.40.1190.20">
    <property type="match status" value="1"/>
</dbReference>
<dbReference type="InterPro" id="IPR002173">
    <property type="entry name" value="Carboh/pur_kinase_PfkB_CS"/>
</dbReference>
<dbReference type="InterPro" id="IPR011611">
    <property type="entry name" value="PfkB_dom"/>
</dbReference>
<dbReference type="InterPro" id="IPR029056">
    <property type="entry name" value="Ribokinase-like"/>
</dbReference>
<dbReference type="InterPro" id="IPR017583">
    <property type="entry name" value="Tagatose/fructose_Pkinase"/>
</dbReference>
<dbReference type="NCBIfam" id="TIGR03168">
    <property type="entry name" value="1-PFK"/>
    <property type="match status" value="1"/>
</dbReference>
<dbReference type="NCBIfam" id="NF007632">
    <property type="entry name" value="PRK10294.1"/>
    <property type="match status" value="1"/>
</dbReference>
<dbReference type="PANTHER" id="PTHR46566">
    <property type="entry name" value="1-PHOSPHOFRUCTOKINASE-RELATED"/>
    <property type="match status" value="1"/>
</dbReference>
<dbReference type="PANTHER" id="PTHR46566:SF2">
    <property type="entry name" value="ATP-DEPENDENT 6-PHOSPHOFRUCTOKINASE ISOZYME 2"/>
    <property type="match status" value="1"/>
</dbReference>
<dbReference type="Pfam" id="PF00294">
    <property type="entry name" value="PfkB"/>
    <property type="match status" value="1"/>
</dbReference>
<dbReference type="PIRSF" id="PIRSF000535">
    <property type="entry name" value="1PFK/6PFK/LacC"/>
    <property type="match status" value="1"/>
</dbReference>
<dbReference type="SUPFAM" id="SSF53613">
    <property type="entry name" value="Ribokinase-like"/>
    <property type="match status" value="1"/>
</dbReference>
<dbReference type="PROSITE" id="PS00583">
    <property type="entry name" value="PFKB_KINASES_1"/>
    <property type="match status" value="1"/>
</dbReference>
<dbReference type="PROSITE" id="PS00584">
    <property type="entry name" value="PFKB_KINASES_2"/>
    <property type="match status" value="1"/>
</dbReference>
<protein>
    <recommendedName>
        <fullName>ATP-dependent 6-phosphofructokinase isozyme 2</fullName>
        <shortName>ATP-PFK 2</shortName>
        <shortName>Phosphofructokinase 2</shortName>
        <ecNumber>2.7.1.11</ecNumber>
    </recommendedName>
    <alternativeName>
        <fullName>6-phosphofructokinase isozyme II</fullName>
    </alternativeName>
    <alternativeName>
        <fullName>Phosphohexokinase 2</fullName>
    </alternativeName>
</protein>
<reference key="1">
    <citation type="journal article" date="1984" name="Gene">
        <title>Nucleotide sequence of gene pfkB encoding the minor phosphofructokinase of Escherichia coli K-12.</title>
        <authorList>
            <person name="Daldal F."/>
        </authorList>
    </citation>
    <scope>NUCLEOTIDE SEQUENCE [GENOMIC DNA]</scope>
    <source>
        <strain>K12</strain>
    </source>
</reference>
<reference key="2">
    <citation type="journal article" date="1996" name="DNA Res.">
        <title>A 570-kb DNA sequence of the Escherichia coli K-12 genome corresponding to the 28.0-40.1 min region on the linkage map.</title>
        <authorList>
            <person name="Aiba H."/>
            <person name="Baba T."/>
            <person name="Fujita K."/>
            <person name="Hayashi K."/>
            <person name="Inada T."/>
            <person name="Isono K."/>
            <person name="Itoh T."/>
            <person name="Kasai H."/>
            <person name="Kashimoto K."/>
            <person name="Kimura S."/>
            <person name="Kitakawa M."/>
            <person name="Kitagawa M."/>
            <person name="Makino K."/>
            <person name="Miki T."/>
            <person name="Mizobuchi K."/>
            <person name="Mori H."/>
            <person name="Mori T."/>
            <person name="Motomura K."/>
            <person name="Nakade S."/>
            <person name="Nakamura Y."/>
            <person name="Nashimoto H."/>
            <person name="Nishio Y."/>
            <person name="Oshima T."/>
            <person name="Saito N."/>
            <person name="Sampei G."/>
            <person name="Seki Y."/>
            <person name="Sivasundaram S."/>
            <person name="Tagami H."/>
            <person name="Takeda J."/>
            <person name="Takemoto K."/>
            <person name="Takeuchi Y."/>
            <person name="Wada C."/>
            <person name="Yamamoto Y."/>
            <person name="Horiuchi T."/>
        </authorList>
    </citation>
    <scope>NUCLEOTIDE SEQUENCE [LARGE SCALE GENOMIC DNA]</scope>
    <source>
        <strain>K12 / W3110 / ATCC 27325 / DSM 5911</strain>
    </source>
</reference>
<reference key="3">
    <citation type="journal article" date="1997" name="Science">
        <title>The complete genome sequence of Escherichia coli K-12.</title>
        <authorList>
            <person name="Blattner F.R."/>
            <person name="Plunkett G. III"/>
            <person name="Bloch C.A."/>
            <person name="Perna N.T."/>
            <person name="Burland V."/>
            <person name="Riley M."/>
            <person name="Collado-Vides J."/>
            <person name="Glasner J.D."/>
            <person name="Rode C.K."/>
            <person name="Mayhew G.F."/>
            <person name="Gregor J."/>
            <person name="Davis N.W."/>
            <person name="Kirkpatrick H.A."/>
            <person name="Goeden M.A."/>
            <person name="Rose D.J."/>
            <person name="Mau B."/>
            <person name="Shao Y."/>
        </authorList>
    </citation>
    <scope>NUCLEOTIDE SEQUENCE [LARGE SCALE GENOMIC DNA]</scope>
    <source>
        <strain>K12 / MG1655 / ATCC 47076</strain>
    </source>
</reference>
<reference key="4">
    <citation type="journal article" date="2006" name="Mol. Syst. Biol.">
        <title>Highly accurate genome sequences of Escherichia coli K-12 strains MG1655 and W3110.</title>
        <authorList>
            <person name="Hayashi K."/>
            <person name="Morooka N."/>
            <person name="Yamamoto Y."/>
            <person name="Fujita K."/>
            <person name="Isono K."/>
            <person name="Choi S."/>
            <person name="Ohtsubo E."/>
            <person name="Baba T."/>
            <person name="Wanner B.L."/>
            <person name="Mori H."/>
            <person name="Horiuchi T."/>
        </authorList>
    </citation>
    <scope>NUCLEOTIDE SEQUENCE [LARGE SCALE GENOMIC DNA]</scope>
    <source>
        <strain>K12 / W3110 / ATCC 27325 / DSM 5911</strain>
    </source>
</reference>
<reference key="5">
    <citation type="journal article" date="1983" name="J. Mol. Biol.">
        <title>Molecular cloning of the gene for phosphofructokinase-2 of Escherichia coli and the nature of a mutation, pfkB1, causing a high level of the enzyme.</title>
        <authorList>
            <person name="Daldal F."/>
        </authorList>
    </citation>
    <scope>NUCLEOTIDE SEQUENCE [GENOMIC DNA] OF 1-38</scope>
</reference>
<reference key="6">
    <citation type="journal article" date="1997" name="Electrophoresis">
        <title>Escherichia coli proteome analysis using the gene-protein database.</title>
        <authorList>
            <person name="VanBogelen R.A."/>
            <person name="Abshire K.Z."/>
            <person name="Moldover B."/>
            <person name="Olson E.R."/>
            <person name="Neidhardt F.C."/>
        </authorList>
    </citation>
    <scope>IDENTIFICATION BY 2D-GEL</scope>
</reference>
<reference key="7">
    <citation type="journal article" date="2006" name="Biochemistry">
        <title>Evidence for a catalytic Mg2+ ion and effect of phosphate on the activity of Escherichia coli phosphofructokinase-2: regulatory properties of a ribokinase family member.</title>
        <authorList>
            <person name="Parducci R.E."/>
            <person name="Cabrera R."/>
            <person name="Baez M."/>
            <person name="Guixe V."/>
        </authorList>
    </citation>
    <scope>FUNCTION</scope>
    <scope>CATALYTIC ACTIVITY</scope>
    <scope>COFACTOR</scope>
    <scope>MUTAGENESIS OF GLU-190</scope>
    <scope>ACTIVITY REGULATION</scope>
</reference>
<reference evidence="9" key="8">
    <citation type="journal article" date="2008" name="J. Mol. Biol.">
        <title>Crystallographic structure of phosphofructokinase-2 from Escherichia coli in complex with two ATP molecules. Implications for substrate inhibition.</title>
        <authorList>
            <person name="Cabrera R."/>
            <person name="Ambrosio A.L."/>
            <person name="Garratt R.C."/>
            <person name="Guixe V."/>
            <person name="Babul J."/>
        </authorList>
    </citation>
    <scope>X-RAY CRYSTALLOGRAPHY (1.98 ANGSTROMS) IN COMPLEX WITH SUBSTRATE ATP AND ALLOSTERIC INHIBITOR ATP</scope>
</reference>
<reference key="9">
    <citation type="journal article" date="2011" name="J. Biol. Chem.">
        <title>The crystal complex of phosphofructokinase-2 of Escherichia coli with fructose-6-phosphate: kinetic and structural analysis of the allosteric ATP inhibition.</title>
        <authorList>
            <person name="Cabrera R."/>
            <person name="Baez M."/>
            <person name="Pereira H.M."/>
            <person name="Caniuguir A."/>
            <person name="Garratt R.C."/>
            <person name="Babul J."/>
        </authorList>
    </citation>
    <scope>X-RAY CRYSTALLOGRAPHY (2.00 ANGSTROMS) IN COMPLEX WITH FRUCTOSE-6-PHOSPHATE</scope>
</reference>
<reference key="10">
    <citation type="submission" date="2011-11" db="PDB data bank">
        <title>Structure of E. coli PFK2 in complex with substrates and products.</title>
        <authorList>
            <person name="Pereira H.M."/>
            <person name="Caniuguir A."/>
            <person name="Baez M."/>
            <person name="Cabrera R."/>
            <person name="Garratt R.C."/>
            <person name="Babul J."/>
        </authorList>
    </citation>
    <scope>X-RAY CRYSTALLOGRAPHY (2.14 ANGSTROMS) IN COMPLEX WITH ADP; ATP; FRUCTOSE-1-6-DIPHOSPHATE AND FRUCTOSE-6-PHOSPHATE</scope>
</reference>
<reference key="11">
    <citation type="submission" date="2011-11" db="PDB data bank">
        <title>Structure of E. coli PFK2 mutant Y23D.</title>
        <authorList>
            <person name="Pereira H.M."/>
            <person name="Caniuguir A."/>
            <person name="Baez M."/>
            <person name="Cabrera R."/>
            <person name="Garratt R.C."/>
            <person name="Babul J."/>
        </authorList>
    </citation>
    <scope>X-RAY CRYSTALLOGRAPHY (2.20 ANGSTROMS) IN COMPLEX WITH ATP AND DIPHOSPHATE</scope>
</reference>
<reference key="12">
    <citation type="journal article" date="2013" name="Biophys. J.">
        <title>A ribokinase family conserved monovalent cation binding site enhances the MgATP-induced inhibition in E. coli phosphofructokinase-2.</title>
        <authorList>
            <person name="Baez M."/>
            <person name="Cabrera R."/>
            <person name="Pereira H.M."/>
            <person name="Blanco A."/>
            <person name="Villalobos P."/>
            <person name="Ramirez-Sarmiento C.A."/>
            <person name="Caniuguir A."/>
            <person name="Guixe V."/>
            <person name="Garratt R.C."/>
            <person name="Babul J."/>
        </authorList>
    </citation>
    <scope>X-RAY CRYSTALLOGRAPHY (1.70 ANGSTROMS) IN COMPLEX WITH ATP AND POTASSIUM</scope>
    <scope>CATALYTIC ACTIVITY</scope>
    <scope>BIOPHYSICOCHEMICAL PROPERTIES</scope>
    <scope>ACTIVITY REGULATION</scope>
</reference>
<gene>
    <name type="primary">pfkB</name>
    <name type="ordered locus">b1723</name>
    <name type="ordered locus">JW5280</name>
</gene>
<evidence type="ECO:0000250" key="1"/>
<evidence type="ECO:0000269" key="2">
    <source>
    </source>
</evidence>
<evidence type="ECO:0000269" key="3">
    <source>
    </source>
</evidence>
<evidence type="ECO:0000269" key="4">
    <source>
    </source>
</evidence>
<evidence type="ECO:0000269" key="5">
    <source>
    </source>
</evidence>
<evidence type="ECO:0000269" key="6">
    <source ref="10"/>
</evidence>
<evidence type="ECO:0000269" key="7">
    <source ref="11"/>
</evidence>
<evidence type="ECO:0000305" key="8"/>
<evidence type="ECO:0007744" key="9">
    <source>
        <dbReference type="PDB" id="3CQD"/>
    </source>
</evidence>
<evidence type="ECO:0007829" key="10">
    <source>
        <dbReference type="PDB" id="3CQD"/>
    </source>
</evidence>
<evidence type="ECO:0007829" key="11">
    <source>
        <dbReference type="PDB" id="3UMO"/>
    </source>
</evidence>
<keyword id="KW-0002">3D-structure</keyword>
<keyword id="KW-0067">ATP-binding</keyword>
<keyword id="KW-0324">Glycolysis</keyword>
<keyword id="KW-0418">Kinase</keyword>
<keyword id="KW-0460">Magnesium</keyword>
<keyword id="KW-0479">Metal-binding</keyword>
<keyword id="KW-0547">Nucleotide-binding</keyword>
<keyword id="KW-0630">Potassium</keyword>
<keyword id="KW-1185">Reference proteome</keyword>
<keyword id="KW-0808">Transferase</keyword>
<accession>P06999</accession>
<accession>P78065</accession>
<accession>P78260</accession>
<comment type="function">
    <text evidence="2">Catalyzes the phosphorylation of D-fructose 6-phosphate to fructose 1,6-bisphosphate by ATP, the first committing step of glycolysis.</text>
</comment>
<comment type="catalytic activity">
    <reaction evidence="2 5">
        <text>beta-D-fructose 6-phosphate + ATP = beta-D-fructose 1,6-bisphosphate + ADP + H(+)</text>
        <dbReference type="Rhea" id="RHEA:16109"/>
        <dbReference type="ChEBI" id="CHEBI:15378"/>
        <dbReference type="ChEBI" id="CHEBI:30616"/>
        <dbReference type="ChEBI" id="CHEBI:32966"/>
        <dbReference type="ChEBI" id="CHEBI:57634"/>
        <dbReference type="ChEBI" id="CHEBI:456216"/>
        <dbReference type="EC" id="2.7.1.11"/>
    </reaction>
</comment>
<comment type="cofactor">
    <cofactor evidence="2">
        <name>Mg(2+)</name>
        <dbReference type="ChEBI" id="CHEBI:18420"/>
    </cofactor>
</comment>
<comment type="activity regulation">
    <text evidence="2 5">Allosterically inhibited by ATP. Allosteric ATP-binding requires the presence of the substrate ATP. Inhibited by monovalent cations with ionic radii larger than Na(+) (e.g. K(+), Cs(+)). The monovalent cations increase the affinity of the allosteric site for ATP. PFK-2 is sensitive to inhibition by fructose 1,6-diphosphate.</text>
</comment>
<comment type="biophysicochemical properties">
    <kinetics>
        <KM evidence="5">8 uM for ATP</KM>
        <KM evidence="5">6 uM for fructose 6-phosphate</KM>
    </kinetics>
</comment>
<comment type="pathway">
    <text>Carbohydrate degradation; glycolysis; D-glyceraldehyde 3-phosphate and glycerone phosphate from D-glucose: step 3/4.</text>
</comment>
<comment type="subunit">
    <text evidence="3 4 5 6 7">Homodimer.</text>
</comment>
<comment type="interaction">
    <interactant intactId="EBI-6966085">
        <id>P06999</id>
    </interactant>
    <interactant intactId="EBI-6966085">
        <id>P06999</id>
        <label>pfkB</label>
    </interactant>
    <organismsDiffer>false</organismsDiffer>
    <experiments>2</experiments>
</comment>
<comment type="miscellaneous">
    <text>Only 10% of the activity present in the wild-type strain is phosphofructokinase-2.</text>
</comment>
<comment type="miscellaneous">
    <text>This enzyme is not to be confused with 6-phosphofructo-2-kinase which is also called phosphofructokinase 2.</text>
</comment>
<comment type="miscellaneous">
    <text>E.coli has two 6-phosphofructokinases enzymes.</text>
</comment>
<comment type="similarity">
    <text evidence="8">Belongs to the carbohydrate kinase PfkB family.</text>
</comment>
<name>PFKB_ECOLI</name>
<feature type="chain" id="PRO_0000080083" description="ATP-dependent 6-phosphofructokinase isozyme 2">
    <location>
        <begin position="1"/>
        <end position="309"/>
    </location>
</feature>
<feature type="active site" evidence="1">
    <location>
        <position position="256"/>
    </location>
</feature>
<feature type="binding site">
    <location>
        <begin position="12"/>
        <end position="14"/>
    </location>
    <ligand>
        <name>substrate</name>
    </ligand>
</feature>
<feature type="binding site">
    <location>
        <begin position="27"/>
        <end position="29"/>
    </location>
    <ligand>
        <name>substrate</name>
    </ligand>
</feature>
<feature type="binding site" evidence="3 5 6 7 9">
    <location>
        <position position="27"/>
    </location>
    <ligand>
        <name>ATP</name>
        <dbReference type="ChEBI" id="CHEBI:30616"/>
        <label>1</label>
        <note>substrate; ligand shared between dimeric partners</note>
    </ligand>
</feature>
<feature type="binding site" evidence="3 9">
    <location>
        <position position="27"/>
    </location>
    <ligand>
        <name>ATP</name>
        <dbReference type="ChEBI" id="CHEBI:30616"/>
        <label>2</label>
        <note>allosteric inhibitor; ligand shared between dimeric partners</note>
    </ligand>
</feature>
<feature type="binding site">
    <location>
        <begin position="39"/>
        <end position="43"/>
    </location>
    <ligand>
        <name>substrate</name>
    </ligand>
</feature>
<feature type="binding site">
    <location>
        <begin position="90"/>
        <end position="92"/>
    </location>
    <ligand>
        <name>substrate</name>
    </ligand>
</feature>
<feature type="binding site">
    <location>
        <position position="139"/>
    </location>
    <ligand>
        <name>substrate</name>
    </ligand>
</feature>
<feature type="binding site" description="in other chain" evidence="3 5 6 7 9">
    <location>
        <begin position="185"/>
        <end position="187"/>
    </location>
    <ligand>
        <name>ATP</name>
        <dbReference type="ChEBI" id="CHEBI:30616"/>
        <label>1</label>
        <note>substrate; ligand shared between dimeric partners</note>
    </ligand>
</feature>
<feature type="binding site" description="in other chain" evidence="3 9">
    <location>
        <begin position="187"/>
        <end position="189"/>
    </location>
    <ligand>
        <name>ATP</name>
        <dbReference type="ChEBI" id="CHEBI:30616"/>
        <label>2</label>
        <note>allosteric inhibitor; ligand shared between dimeric partners</note>
    </ligand>
</feature>
<feature type="binding site" evidence="8">
    <location>
        <position position="190"/>
    </location>
    <ligand>
        <name>Mg(2+)</name>
        <dbReference type="ChEBI" id="CHEBI:18420"/>
        <note>catalytic</note>
    </ligand>
</feature>
<feature type="binding site" description="in other chain" evidence="3 5 6 7 9">
    <location>
        <begin position="224"/>
        <end position="229"/>
    </location>
    <ligand>
        <name>ATP</name>
        <dbReference type="ChEBI" id="CHEBI:30616"/>
        <label>1</label>
        <note>substrate; ligand shared between dimeric partners</note>
    </ligand>
</feature>
<feature type="binding site" description="in other chain" evidence="3 5 6 7 9">
    <location>
        <position position="248"/>
    </location>
    <ligand>
        <name>ATP</name>
        <dbReference type="ChEBI" id="CHEBI:30616"/>
        <label>1</label>
        <note>substrate; ligand shared between dimeric partners</note>
    </ligand>
</feature>
<feature type="binding site" evidence="5">
    <location>
        <position position="250"/>
    </location>
    <ligand>
        <name>K(+)</name>
        <dbReference type="ChEBI" id="CHEBI:29103"/>
    </ligand>
</feature>
<feature type="binding site" evidence="5">
    <location>
        <position position="252"/>
    </location>
    <ligand>
        <name>K(+)</name>
        <dbReference type="ChEBI" id="CHEBI:29103"/>
    </ligand>
</feature>
<feature type="binding site">
    <location>
        <position position="256"/>
    </location>
    <ligand>
        <name>substrate</name>
    </ligand>
</feature>
<feature type="binding site" description="in other chain" evidence="3 5 6 7 9">
    <location>
        <position position="280"/>
    </location>
    <ligand>
        <name>ATP</name>
        <dbReference type="ChEBI" id="CHEBI:30616"/>
        <label>1</label>
        <note>substrate; ligand shared between dimeric partners</note>
    </ligand>
</feature>
<feature type="binding site" description="in other chain" evidence="3 5 6 7 9">
    <location>
        <position position="284"/>
    </location>
    <ligand>
        <name>ATP</name>
        <dbReference type="ChEBI" id="CHEBI:30616"/>
        <label>1</label>
        <note>substrate; ligand shared between dimeric partners</note>
    </ligand>
</feature>
<feature type="binding site" evidence="5">
    <location>
        <position position="286"/>
    </location>
    <ligand>
        <name>K(+)</name>
        <dbReference type="ChEBI" id="CHEBI:29103"/>
    </ligand>
</feature>
<feature type="binding site" evidence="5">
    <location>
        <position position="289"/>
    </location>
    <ligand>
        <name>K(+)</name>
        <dbReference type="ChEBI" id="CHEBI:29103"/>
    </ligand>
</feature>
<feature type="binding site" evidence="5">
    <location>
        <position position="291"/>
    </location>
    <ligand>
        <name>K(+)</name>
        <dbReference type="ChEBI" id="CHEBI:29103"/>
    </ligand>
</feature>
<feature type="binding site" evidence="5">
    <location>
        <position position="293"/>
    </location>
    <ligand>
        <name>K(+)</name>
        <dbReference type="ChEBI" id="CHEBI:29103"/>
    </ligand>
</feature>
<feature type="mutagenesis site" description="Causes a 50-fold decrease in the kcat value and a 15-fold increment in the apparent KM for ATP." evidence="2">
    <original>E</original>
    <variation>Q</variation>
    <location>
        <position position="190"/>
    </location>
</feature>
<feature type="sequence conflict" description="In Ref. 1; AAA24321 and 5; AAA24320." evidence="8" ref="1 5">
    <original>GKLRCTAPVFEPG</original>
    <variation>ENCAVPHRCSNP</variation>
    <location>
        <begin position="26"/>
        <end position="38"/>
    </location>
</feature>
<feature type="sequence conflict" description="In Ref. 1; AAA24321." evidence="8" ref="1">
    <original>AAQKQGIRCIVDSSGEA</original>
    <variation>LRKNKGSAASSTVLGQG</variation>
    <location>
        <begin position="155"/>
        <end position="171"/>
    </location>
</feature>
<feature type="sequence conflict" description="In Ref. 1; AAA24321." evidence="8" ref="1">
    <original>PV</original>
    <variation>AL</variation>
    <location>
        <begin position="245"/>
        <end position="246"/>
    </location>
</feature>
<feature type="sequence conflict" description="In Ref. 1; AAA24321." evidence="8" ref="1">
    <original>SM</original>
    <variation>RL</variation>
    <location>
        <begin position="257"/>
        <end position="258"/>
    </location>
</feature>
<feature type="strand" evidence="11">
    <location>
        <begin position="4"/>
        <end position="7"/>
    </location>
</feature>
<feature type="strand" evidence="11">
    <location>
        <begin position="12"/>
        <end position="20"/>
    </location>
</feature>
<feature type="strand" evidence="11">
    <location>
        <begin position="24"/>
        <end position="29"/>
    </location>
</feature>
<feature type="strand" evidence="11">
    <location>
        <begin position="34"/>
        <end position="39"/>
    </location>
</feature>
<feature type="helix" evidence="11">
    <location>
        <begin position="40"/>
        <end position="50"/>
    </location>
</feature>
<feature type="strand" evidence="11">
    <location>
        <begin position="55"/>
        <end position="61"/>
    </location>
</feature>
<feature type="helix" evidence="11">
    <location>
        <begin position="63"/>
        <end position="75"/>
    </location>
</feature>
<feature type="strand" evidence="11">
    <location>
        <begin position="80"/>
        <end position="84"/>
    </location>
</feature>
<feature type="strand" evidence="11">
    <location>
        <begin position="93"/>
        <end position="97"/>
    </location>
</feature>
<feature type="turn" evidence="11">
    <location>
        <begin position="98"/>
        <end position="100"/>
    </location>
</feature>
<feature type="strand" evidence="11">
    <location>
        <begin position="103"/>
        <end position="107"/>
    </location>
</feature>
<feature type="helix" evidence="11">
    <location>
        <begin position="115"/>
        <end position="125"/>
    </location>
</feature>
<feature type="strand" evidence="11">
    <location>
        <begin position="133"/>
        <end position="138"/>
    </location>
</feature>
<feature type="helix" evidence="11">
    <location>
        <begin position="146"/>
        <end position="158"/>
    </location>
</feature>
<feature type="strand" evidence="11">
    <location>
        <begin position="162"/>
        <end position="166"/>
    </location>
</feature>
<feature type="helix" evidence="11">
    <location>
        <begin position="169"/>
        <end position="175"/>
    </location>
</feature>
<feature type="turn" evidence="10">
    <location>
        <begin position="176"/>
        <end position="178"/>
    </location>
</feature>
<feature type="strand" evidence="11">
    <location>
        <begin position="181"/>
        <end position="184"/>
    </location>
</feature>
<feature type="helix" evidence="11">
    <location>
        <begin position="188"/>
        <end position="195"/>
    </location>
</feature>
<feature type="helix" evidence="11">
    <location>
        <begin position="204"/>
        <end position="214"/>
    </location>
</feature>
<feature type="strand" evidence="11">
    <location>
        <begin position="217"/>
        <end position="219"/>
    </location>
</feature>
<feature type="strand" evidence="11">
    <location>
        <begin position="221"/>
        <end position="224"/>
    </location>
</feature>
<feature type="helix" evidence="11">
    <location>
        <begin position="226"/>
        <end position="228"/>
    </location>
</feature>
<feature type="strand" evidence="11">
    <location>
        <begin position="230"/>
        <end position="233"/>
    </location>
</feature>
<feature type="strand" evidence="11">
    <location>
        <begin position="238"/>
        <end position="241"/>
    </location>
</feature>
<feature type="helix" evidence="11">
    <location>
        <begin position="254"/>
        <end position="267"/>
    </location>
</feature>
<feature type="helix" evidence="11">
    <location>
        <begin position="272"/>
        <end position="286"/>
    </location>
</feature>
<feature type="strand" evidence="10">
    <location>
        <begin position="289"/>
        <end position="292"/>
    </location>
</feature>
<feature type="helix" evidence="11">
    <location>
        <begin position="297"/>
        <end position="307"/>
    </location>
</feature>
<proteinExistence type="evidence at protein level"/>